<accession>Q8I5V4</accession>
<accession>B3FEM4</accession>
<accession>B3FEM5</accession>
<accession>Q2V2M6</accession>
<sequence length="954" mass="115412">MMDTKVDQTIQPKFYVDKKLSKSFDNKLDEDIFNYPFKKESFLKSEKFSFEHTKDSLWKCIKEKAKKKSDMEYFNCVNNLCCKFICTIRKYVKYFLYLKDSSYEIYNINLYNNNNMNIINNKNITNNKNITNNINNSFSNDYINYNHNYNHLNNSSSSKHNNYNVNNIDEKNIKNDYNTYHNIYEQIFFKYNPSFYEYLMFTLMKKLIHYKNYIFNKTKKINNSYNNNDIKNIDGFLIFQNINFEEIFLNTFYSSFPFKLFLHSLYMIFICFIYFVVLYFMLLKKIYTHPFIFHLSVLKFLFDIIFFLSFILYPLFLRLKRIDKIIYSSYISSYIFVCVTFLYSFIIFKCSSYSVKMNSNTYQNNFVFQNMLFLLINIIYICIFCFLKNYMILYSFLYNCRFSIFCILFIFLYYYLFFSLDFYRIIHLPLDNFFFPFLCFLFFSFLFIFKIIMSLYYEYVYEKKYRILFVKKNNLIEKRITKRKNTNINNAYFTKYFSIDNTIPTSPIEDILNNFKHILETINIIEENPNHNLTTNIMKIKEKIKNCDNILRTKNINQVQIGKYRKFEKVYNIWCLDKMYLNYPLNQEETKSFLSNSLNRISFNSFSNMHSLLSSKFQEHYNDIYDWNGNIENIYKANTFISIGYKLLYPLGVLEANFDKEKLKKFLFRICSYYNDIPYHTSLHAAQVAHFSKSMLFMLDMNHKISAIDEFCLHISSLCHDTGHPGLNNYFLINSENNLALTYNDNSVLENYHCSLLFKTLKNPNYNIFEHYPYHIFISCKKNIIKAILSTDMKNHFEYISDFRTSKEFIDYDNLSNDQIWQIFCLILKASDIGHSTLEWNKHLEWTLKINEEFYLQGLLEKSLNIQNSFLCDINTMNKLALSQIDFLKHLCIPLFNELNYICKNNDVYTHCIQPIENNIERWESHKNDNQNLGLHEKYKEENLLSKLELIKFE</sequence>
<feature type="chain" id="PRO_0000452647" description="cGMP-specific 3',5'-cyclic phosphodiesterase alpha">
    <location>
        <begin position="1"/>
        <end position="954"/>
    </location>
</feature>
<feature type="topological domain" description="Cytoplasmic" evidence="8">
    <location>
        <begin position="1"/>
        <end position="259"/>
    </location>
</feature>
<feature type="transmembrane region" description="Helical" evidence="2">
    <location>
        <begin position="260"/>
        <end position="280"/>
    </location>
</feature>
<feature type="topological domain" description="Extracellular" evidence="8">
    <location>
        <begin position="281"/>
        <end position="296"/>
    </location>
</feature>
<feature type="transmembrane region" description="Helical" evidence="2">
    <location>
        <begin position="297"/>
        <end position="317"/>
    </location>
</feature>
<feature type="topological domain" description="Cytoplasmic" evidence="8">
    <location>
        <begin position="318"/>
        <end position="327"/>
    </location>
</feature>
<feature type="transmembrane region" description="Helical" evidence="2">
    <location>
        <begin position="328"/>
        <end position="348"/>
    </location>
</feature>
<feature type="topological domain" description="Extracellular" evidence="8">
    <location>
        <begin position="349"/>
        <end position="365"/>
    </location>
</feature>
<feature type="transmembrane region" description="Helical" evidence="2">
    <location>
        <begin position="366"/>
        <end position="386"/>
    </location>
</feature>
<feature type="topological domain" description="Cytoplasmic" evidence="8">
    <location>
        <begin position="387"/>
        <end position="401"/>
    </location>
</feature>
<feature type="transmembrane region" description="Helical" evidence="2">
    <location>
        <begin position="402"/>
        <end position="422"/>
    </location>
</feature>
<feature type="topological domain" description="Extracellular" evidence="8">
    <location>
        <begin position="423"/>
        <end position="432"/>
    </location>
</feature>
<feature type="transmembrane region" description="Helical" evidence="2">
    <location>
        <begin position="433"/>
        <end position="453"/>
    </location>
</feature>
<feature type="topological domain" description="Cytoplasmic" evidence="8">
    <location>
        <begin position="454"/>
        <end position="954"/>
    </location>
</feature>
<feature type="domain" description="PDEase" evidence="3">
    <location>
        <begin position="586"/>
        <end position="930"/>
    </location>
</feature>
<feature type="active site" description="Proton donor" evidence="3">
    <location>
        <position position="680"/>
    </location>
</feature>
<feature type="binding site" evidence="1">
    <location>
        <begin position="680"/>
        <end position="684"/>
    </location>
    <ligand>
        <name>3',5'-cyclic GMP</name>
        <dbReference type="ChEBI" id="CHEBI:57746"/>
    </ligand>
</feature>
<feature type="binding site" evidence="1">
    <location>
        <position position="684"/>
    </location>
    <ligand>
        <name>Zn(2+)</name>
        <dbReference type="ChEBI" id="CHEBI:29105"/>
    </ligand>
</feature>
<feature type="binding site" evidence="1">
    <location>
        <position position="720"/>
    </location>
    <ligand>
        <name>Zn(2+)</name>
        <dbReference type="ChEBI" id="CHEBI:29105"/>
    </ligand>
</feature>
<feature type="binding site" evidence="1">
    <location>
        <position position="721"/>
    </location>
    <ligand>
        <name>3',5'-cyclic GMP</name>
        <dbReference type="ChEBI" id="CHEBI:57746"/>
    </ligand>
</feature>
<feature type="binding site" evidence="1">
    <location>
        <position position="721"/>
    </location>
    <ligand>
        <name>Mg(2+)</name>
        <dbReference type="ChEBI" id="CHEBI:18420"/>
    </ligand>
</feature>
<feature type="binding site" evidence="1">
    <location>
        <position position="721"/>
    </location>
    <ligand>
        <name>Zn(2+)</name>
        <dbReference type="ChEBI" id="CHEBI:29105"/>
    </ligand>
</feature>
<feature type="binding site" evidence="1">
    <location>
        <position position="832"/>
    </location>
    <ligand>
        <name>3',5'-cyclic GMP</name>
        <dbReference type="ChEBI" id="CHEBI:57746"/>
    </ligand>
</feature>
<feature type="binding site" evidence="1">
    <location>
        <position position="832"/>
    </location>
    <ligand>
        <name>Zn(2+)</name>
        <dbReference type="ChEBI" id="CHEBI:29105"/>
    </ligand>
</feature>
<feature type="binding site" evidence="1">
    <location>
        <position position="884"/>
    </location>
    <ligand>
        <name>3',5'-cyclic GMP</name>
        <dbReference type="ChEBI" id="CHEBI:57746"/>
    </ligand>
</feature>
<feature type="splice variant" id="VSP_061031" description="In isoform 2." evidence="8">
    <original>SNTYQNNFVFQNMLFLLINIIYICIFCFLKNYMILYSFLYNCRFSIFCILFIFLYYYLFFSLD</original>
    <variation>N</variation>
    <location>
        <begin position="359"/>
        <end position="421"/>
    </location>
</feature>
<evidence type="ECO:0000250" key="1">
    <source>
        <dbReference type="UniProtKB" id="O76083"/>
    </source>
</evidence>
<evidence type="ECO:0000255" key="2"/>
<evidence type="ECO:0000255" key="3">
    <source>
        <dbReference type="PROSITE-ProRule" id="PRU01192"/>
    </source>
</evidence>
<evidence type="ECO:0000269" key="4">
    <source>
    </source>
</evidence>
<evidence type="ECO:0000269" key="5">
    <source>
    </source>
</evidence>
<evidence type="ECO:0000303" key="6">
    <source>
    </source>
</evidence>
<evidence type="ECO:0000303" key="7">
    <source>
    </source>
</evidence>
<evidence type="ECO:0000305" key="8"/>
<evidence type="ECO:0000305" key="9">
    <source>
    </source>
</evidence>
<evidence type="ECO:0000305" key="10">
    <source>
    </source>
</evidence>
<evidence type="ECO:0000312" key="11">
    <source>
        <dbReference type="EMBL" id="ABS50256.1"/>
    </source>
</evidence>
<evidence type="ECO:0000312" key="12">
    <source>
        <dbReference type="EMBL" id="ABS50257.1"/>
    </source>
</evidence>
<evidence type="ECO:0000312" key="13">
    <source>
        <dbReference type="EMBL" id="BAE54522.1"/>
    </source>
</evidence>
<evidence type="ECO:0000312" key="14">
    <source>
        <dbReference type="EMBL" id="CZT99257.1"/>
    </source>
</evidence>
<evidence type="ECO:0000312" key="15">
    <source>
        <dbReference type="Proteomes" id="UP000001450"/>
    </source>
</evidence>
<comment type="function">
    <text evidence="4 5">Specifically hydrolyzes the second messenger cGMP, which is a key regulator of many important physiological processes.</text>
</comment>
<comment type="catalytic activity">
    <reaction evidence="4 5">
        <text>3',5'-cyclic GMP + H2O = GMP + H(+)</text>
        <dbReference type="Rhea" id="RHEA:16957"/>
        <dbReference type="ChEBI" id="CHEBI:15377"/>
        <dbReference type="ChEBI" id="CHEBI:15378"/>
        <dbReference type="ChEBI" id="CHEBI:57746"/>
        <dbReference type="ChEBI" id="CHEBI:58115"/>
        <dbReference type="EC" id="3.1.4.35"/>
    </reaction>
</comment>
<comment type="cofactor">
    <cofactor evidence="5">
        <name>Zn(2+)</name>
        <dbReference type="ChEBI" id="CHEBI:29105"/>
    </cofactor>
    <text evidence="1">Binds 1 Zn(2+) ion per subunit. Binds 2 divalent metal cations per subunit: site 1 preferentially binds zinc, while site 2 has a preference for magnesium (By similarity). Tightly binds zinc (By similarity).</text>
</comment>
<comment type="cofactor">
    <cofactor evidence="4">
        <name>Mg(2+)</name>
        <dbReference type="ChEBI" id="CHEBI:18420"/>
    </cofactor>
    <text evidence="1">Binds 1 Mg(2+) ion per subunit. Binds 2 divalent metal cations per subunit: site 1 preferentially binds zinc, while site 2 has a preference for magnesium (By similarity). Binds magnesium less tightly than zinc (By similarity).</text>
</comment>
<comment type="activity regulation">
    <text evidence="4 5">Not inhibited by cAMP (PubMed:18590734). Inhibited by zaprinast (PubMed:16038615, PubMed:18590734).</text>
</comment>
<comment type="biophysicochemical properties">
    <kinetics>
        <KM evidence="5">2 uM for cGMP (for catalytic domain residues 610-954 and in presence of Zn(2+))</KM>
        <KM evidence="4">0.65 uM for cGMP (for catalytic domain residues 610-954, in presence of Mn(2+) and at 37 degrees Celsius)</KM>
        <Vmax evidence="4">91.0 pmol/min/mg enzyme with cAMP as substrate (for catalytic domain residues 610-954, in presence of Mn(2+) and at 37 degrees Celsius)</Vmax>
    </kinetics>
</comment>
<comment type="pathway">
    <text evidence="4 5">Purine metabolism; 3',5'-cyclic GMP degradation; GMP from 3',5'-cyclic GMP: step 1/1.</text>
</comment>
<comment type="subcellular location">
    <subcellularLocation>
        <location evidence="9 10">Membrane</location>
        <topology evidence="2">Multi-pass membrane protein</topology>
    </subcellularLocation>
</comment>
<comment type="alternative products">
    <event type="alternative splicing"/>
    <isoform>
        <id>Q8I5V4-1</id>
        <name>1</name>
        <name evidence="7">PDEalphaA</name>
        <sequence type="displayed"/>
    </isoform>
    <isoform>
        <id>Q8I5V4-2</id>
        <name>2</name>
        <name evidence="7">PDEalphaB</name>
        <sequence type="described" ref="VSP_061031"/>
    </isoform>
</comment>
<comment type="developmental stage">
    <text evidence="4 5">Expressed at the ring stage during the asexual blood stage.</text>
</comment>
<comment type="disruption phenotype">
    <text evidence="5">Knockouts at the asexual blood stage are viable and have normal merozoite formation in the host erythrocytes (PubMed:18590734). cGMP hydrolysis is reduced by about 20% with no effect on cAMP hydrolysis (PubMed:18590734).</text>
</comment>
<comment type="similarity">
    <text evidence="8">Belongs to the cyclic nucleotide phosphodiesterase family.</text>
</comment>
<comment type="sequence caution" evidence="8">
    <conflict type="erroneous initiation">
        <sequence resource="EMBL-CDS" id="BAE54522"/>
    </conflict>
    <text>Truncated N-terminus.</text>
</comment>
<dbReference type="EC" id="3.1.4.35" evidence="4 5"/>
<dbReference type="EMBL" id="AB100091">
    <property type="protein sequence ID" value="BAE54522.1"/>
    <property type="status" value="ALT_INIT"/>
    <property type="molecule type" value="mRNA"/>
</dbReference>
<dbReference type="EMBL" id="EF673784">
    <property type="protein sequence ID" value="ABS50256.1"/>
    <property type="molecule type" value="mRNA"/>
</dbReference>
<dbReference type="EMBL" id="EF673785">
    <property type="protein sequence ID" value="ABS50257.1"/>
    <property type="molecule type" value="mRNA"/>
</dbReference>
<dbReference type="EMBL" id="LN999947">
    <property type="protein sequence ID" value="CZT99257.1"/>
    <property type="molecule type" value="Genomic_DNA"/>
</dbReference>
<dbReference type="EMBL" id="LN999947">
    <property type="protein sequence ID" value="CZT99258.1"/>
    <property type="molecule type" value="Genomic_DNA"/>
</dbReference>
<dbReference type="RefSeq" id="XP_001350504.2">
    <molecule id="Q8I5V4-1"/>
    <property type="nucleotide sequence ID" value="XM_001350468.2"/>
</dbReference>
<dbReference type="SMR" id="Q8I5V4"/>
<dbReference type="FunCoup" id="Q8I5V4">
    <property type="interactions" value="30"/>
</dbReference>
<dbReference type="STRING" id="36329.Q8I5V4"/>
<dbReference type="PaxDb" id="5833-PFL0475w"/>
<dbReference type="EnsemblProtists" id="CZT99257">
    <molecule id="Q8I5V4-1"/>
    <property type="protein sequence ID" value="CZT99257"/>
    <property type="gene ID" value="PF3D7_1209500.1"/>
</dbReference>
<dbReference type="EnsemblProtists" id="CZT99258">
    <molecule id="Q8I5V4-2"/>
    <property type="protein sequence ID" value="CZT99258"/>
    <property type="gene ID" value="PF3D7_1209500.2"/>
</dbReference>
<dbReference type="GeneID" id="811148"/>
<dbReference type="KEGG" id="pfa:PF3D7_1209500.1"/>
<dbReference type="VEuPathDB" id="PlasmoDB:PF3D7_1209500"/>
<dbReference type="VEuPathDB" id="PlasmoDB:Pf7G8_120014500"/>
<dbReference type="VEuPathDB" id="PlasmoDB:PfCD01_120014500"/>
<dbReference type="VEuPathDB" id="PlasmoDB:PfDd2_120014300"/>
<dbReference type="VEuPathDB" id="PlasmoDB:PfGA01_120014500"/>
<dbReference type="VEuPathDB" id="PlasmoDB:PfGB4_120014500"/>
<dbReference type="VEuPathDB" id="PlasmoDB:PfGN01_120015900"/>
<dbReference type="VEuPathDB" id="PlasmoDB:PfHB3_120014700"/>
<dbReference type="VEuPathDB" id="PlasmoDB:PfIT_120014900"/>
<dbReference type="VEuPathDB" id="PlasmoDB:PfKE01_120014900"/>
<dbReference type="VEuPathDB" id="PlasmoDB:PfKH01_120016000"/>
<dbReference type="VEuPathDB" id="PlasmoDB:PfKH02_120014900"/>
<dbReference type="VEuPathDB" id="PlasmoDB:PfML01_120015000"/>
<dbReference type="VEuPathDB" id="PlasmoDB:PfSD01_120014600"/>
<dbReference type="VEuPathDB" id="PlasmoDB:PfSN01_120015500"/>
<dbReference type="VEuPathDB" id="PlasmoDB:PfTG01_120014900"/>
<dbReference type="HOGENOM" id="CLU_302394_0_0_1"/>
<dbReference type="InParanoid" id="Q8I5V4"/>
<dbReference type="OMA" id="IFITCKK"/>
<dbReference type="OrthoDB" id="546632at2759"/>
<dbReference type="PhylomeDB" id="Q8I5V4"/>
<dbReference type="BRENDA" id="3.1.4.35">
    <property type="organism ID" value="4889"/>
</dbReference>
<dbReference type="Reactome" id="R-PFA-111957">
    <property type="pathway name" value="Cam-PDE 1 activation"/>
</dbReference>
<dbReference type="Reactome" id="R-PFA-165160">
    <property type="pathway name" value="PDE3B signalling"/>
</dbReference>
<dbReference type="Reactome" id="R-PFA-180024">
    <property type="pathway name" value="DARPP-32 events"/>
</dbReference>
<dbReference type="Reactome" id="R-PFA-418457">
    <property type="pathway name" value="cGMP effects"/>
</dbReference>
<dbReference type="Reactome" id="R-PFA-418555">
    <property type="pathway name" value="G alpha (s) signalling events"/>
</dbReference>
<dbReference type="UniPathway" id="UPA00763">
    <property type="reaction ID" value="UER00748"/>
</dbReference>
<dbReference type="Proteomes" id="UP000001450">
    <property type="component" value="Chromosome 12"/>
</dbReference>
<dbReference type="GO" id="GO:0016020">
    <property type="term" value="C:membrane"/>
    <property type="evidence" value="ECO:0007669"/>
    <property type="project" value="UniProtKB-SubCell"/>
</dbReference>
<dbReference type="GO" id="GO:0004115">
    <property type="term" value="F:3',5'-cyclic-AMP phosphodiesterase activity"/>
    <property type="evidence" value="ECO:0000318"/>
    <property type="project" value="GO_Central"/>
</dbReference>
<dbReference type="GO" id="GO:0047555">
    <property type="term" value="F:3',5'-cyclic-GMP phosphodiesterase activity"/>
    <property type="evidence" value="ECO:0000314"/>
    <property type="project" value="UniProtKB"/>
</dbReference>
<dbReference type="GO" id="GO:0046872">
    <property type="term" value="F:metal ion binding"/>
    <property type="evidence" value="ECO:0007669"/>
    <property type="project" value="UniProtKB-KW"/>
</dbReference>
<dbReference type="GO" id="GO:0019933">
    <property type="term" value="P:cAMP-mediated signaling"/>
    <property type="evidence" value="ECO:0000318"/>
    <property type="project" value="GO_Central"/>
</dbReference>
<dbReference type="GO" id="GO:0046069">
    <property type="term" value="P:cGMP catabolic process"/>
    <property type="evidence" value="ECO:0000314"/>
    <property type="project" value="UniProtKB"/>
</dbReference>
<dbReference type="CDD" id="cd00077">
    <property type="entry name" value="HDc"/>
    <property type="match status" value="1"/>
</dbReference>
<dbReference type="FunFam" id="1.10.1300.10:FF:000016">
    <property type="entry name" value="cGMP-specific phosphodiesterase"/>
    <property type="match status" value="1"/>
</dbReference>
<dbReference type="Gene3D" id="1.10.1300.10">
    <property type="entry name" value="3'5'-cyclic nucleotide phosphodiesterase, catalytic domain"/>
    <property type="match status" value="1"/>
</dbReference>
<dbReference type="InterPro" id="IPR003607">
    <property type="entry name" value="HD/PDEase_dom"/>
</dbReference>
<dbReference type="InterPro" id="IPR023088">
    <property type="entry name" value="PDEase"/>
</dbReference>
<dbReference type="InterPro" id="IPR002073">
    <property type="entry name" value="PDEase_catalytic_dom"/>
</dbReference>
<dbReference type="InterPro" id="IPR036971">
    <property type="entry name" value="PDEase_catalytic_dom_sf"/>
</dbReference>
<dbReference type="PANTHER" id="PTHR11347">
    <property type="entry name" value="CYCLIC NUCLEOTIDE PHOSPHODIESTERASE"/>
    <property type="match status" value="1"/>
</dbReference>
<dbReference type="Pfam" id="PF00233">
    <property type="entry name" value="PDEase_I"/>
    <property type="match status" value="1"/>
</dbReference>
<dbReference type="PRINTS" id="PR00387">
    <property type="entry name" value="PDIESTERASE1"/>
</dbReference>
<dbReference type="SUPFAM" id="SSF109604">
    <property type="entry name" value="HD-domain/PDEase-like"/>
    <property type="match status" value="1"/>
</dbReference>
<dbReference type="PROSITE" id="PS51845">
    <property type="entry name" value="PDEASE_I_2"/>
    <property type="match status" value="1"/>
</dbReference>
<gene>
    <name evidence="7" type="primary">PDEalpha</name>
    <name evidence="6" type="synonym">PDE1</name>
    <name evidence="14" type="ORF">PF3D7_1209500.1</name>
    <name evidence="11" type="ORF">PFL0475w</name>
</gene>
<name>PDEA_PLAF7</name>
<organism evidence="11">
    <name type="scientific">Plasmodium falciparum (isolate 3D7)</name>
    <dbReference type="NCBI Taxonomy" id="36329"/>
    <lineage>
        <taxon>Eukaryota</taxon>
        <taxon>Sar</taxon>
        <taxon>Alveolata</taxon>
        <taxon>Apicomplexa</taxon>
        <taxon>Aconoidasida</taxon>
        <taxon>Haemosporida</taxon>
        <taxon>Plasmodiidae</taxon>
        <taxon>Plasmodium</taxon>
        <taxon>Plasmodium (Laverania)</taxon>
    </lineage>
</organism>
<reference evidence="13" key="1">
    <citation type="journal article" date="2005" name="Biochem. J.">
        <title>PfPDE1, a novel cGMP-specific phosphodiesterase from the human malaria parasite Plasmodium falciparum.</title>
        <authorList>
            <person name="Yuasa K."/>
            <person name="Mi-Ichi F."/>
            <person name="Kobayashi T."/>
            <person name="Yamanouchi M."/>
            <person name="Kotera J."/>
            <person name="Kita K."/>
            <person name="Omori K."/>
        </authorList>
    </citation>
    <scope>NUCLEOTIDE SEQUENCE [MRNA] (ISOFORM 1)</scope>
    <scope>FUNCTION</scope>
    <scope>CATALYTIC ACTIVITY</scope>
    <scope>COFACTOR</scope>
    <scope>ACTIVITY REGULATION</scope>
    <scope>BIOPHYSICOCHEMICAL PROPERTIES</scope>
    <scope>PATHWAY</scope>
    <scope>SUBCELLULAR LOCATION</scope>
    <scope>DEVELOPMENTAL STAGE</scope>
    <source>
        <strain evidence="13">3D7</strain>
    </source>
</reference>
<reference evidence="11 12" key="2">
    <citation type="journal article" date="2008" name="Int. J. Parasitol.">
        <title>Cyclic nucleotide-specific phosphodiesterases of Plasmodium falciparum: PfPDEalpha, a non-essential cGMP-specific PDE that is an integral membrane protein.</title>
        <authorList>
            <person name="Wentzinger L."/>
            <person name="Bopp S."/>
            <person name="Tenor H."/>
            <person name="Klar J."/>
            <person name="Brun R."/>
            <person name="Beck H.P."/>
            <person name="Seebeck T."/>
        </authorList>
    </citation>
    <scope>NUCLEOTIDE SEQUENCE [MRNA] (ISOFORMS 1 AND 2)</scope>
    <scope>FUNCTION</scope>
    <scope>CATALYTIC ACTIVITY</scope>
    <scope>COFACTOR</scope>
    <scope>ACTIVITY REGULATION</scope>
    <scope>BIOPHYSICOCHEMICAL PROPERTIES</scope>
    <scope>PATHWAY</scope>
    <scope>SUBCELLULAR LOCATION</scope>
    <scope>DEVELOPMENTAL STAGE</scope>
    <scope>DISRUPTION PHENOTYPE</scope>
    <source>
        <strain evidence="11">3D7</strain>
    </source>
</reference>
<reference evidence="15" key="3">
    <citation type="journal article" date="2002" name="Nature">
        <title>Genome sequence of the human malaria parasite Plasmodium falciparum.</title>
        <authorList>
            <person name="Gardner M.J."/>
            <person name="Hall N."/>
            <person name="Fung E."/>
            <person name="White O."/>
            <person name="Berriman M."/>
            <person name="Hyman R.W."/>
            <person name="Carlton J.M."/>
            <person name="Pain A."/>
            <person name="Nelson K.E."/>
            <person name="Bowman S."/>
            <person name="Paulsen I.T."/>
            <person name="James K.D."/>
            <person name="Eisen J.A."/>
            <person name="Rutherford K.M."/>
            <person name="Salzberg S.L."/>
            <person name="Craig A."/>
            <person name="Kyes S."/>
            <person name="Chan M.-S."/>
            <person name="Nene V."/>
            <person name="Shallom S.J."/>
            <person name="Suh B."/>
            <person name="Peterson J."/>
            <person name="Angiuoli S."/>
            <person name="Pertea M."/>
            <person name="Allen J."/>
            <person name="Selengut J."/>
            <person name="Haft D."/>
            <person name="Mather M.W."/>
            <person name="Vaidya A.B."/>
            <person name="Martin D.M.A."/>
            <person name="Fairlamb A.H."/>
            <person name="Fraunholz M.J."/>
            <person name="Roos D.S."/>
            <person name="Ralph S.A."/>
            <person name="McFadden G.I."/>
            <person name="Cummings L.M."/>
            <person name="Subramanian G.M."/>
            <person name="Mungall C."/>
            <person name="Venter J.C."/>
            <person name="Carucci D.J."/>
            <person name="Hoffman S.L."/>
            <person name="Newbold C."/>
            <person name="Davis R.W."/>
            <person name="Fraser C.M."/>
            <person name="Barrell B.G."/>
        </authorList>
    </citation>
    <scope>NUCLEOTIDE SEQUENCE [LARGE SCALE GENOMIC DNA]</scope>
    <source>
        <strain evidence="15">3D7</strain>
    </source>
</reference>
<keyword id="KW-0025">Alternative splicing</keyword>
<keyword id="KW-0140">cGMP</keyword>
<keyword id="KW-0378">Hydrolase</keyword>
<keyword id="KW-0460">Magnesium</keyword>
<keyword id="KW-0472">Membrane</keyword>
<keyword id="KW-0479">Metal-binding</keyword>
<keyword id="KW-1185">Reference proteome</keyword>
<keyword id="KW-0812">Transmembrane</keyword>
<keyword id="KW-1133">Transmembrane helix</keyword>
<keyword id="KW-0862">Zinc</keyword>
<proteinExistence type="evidence at protein level"/>
<protein>
    <recommendedName>
        <fullName evidence="8">cGMP-specific 3',5'-cyclic phosphodiesterase alpha</fullName>
        <shortName evidence="6">PfPDE1</shortName>
        <shortName evidence="7">PfPDEalpha</shortName>
        <ecNumber evidence="4 5">3.1.4.35</ecNumber>
    </recommendedName>
</protein>